<sequence length="396" mass="42581">MSEYSLFTSESVSEGHPDKIADQISDAVLDAIIAEDKFARVACETLVKTGVAIIAGEVTTTAWVDLEQIVRDVITDIGYTSSDVGFDGATCGVMNIIGKQSPDINQGVDRAKPEDQGAGDQGLMFGYASNETDVLMPAPITFSHQLVQRQAEARKSGLLPWLRPDAKSQVTCRYEGGKVVGIDAVVLSTQHNPDVSYADLREGVMELIVKHVLPAELLSKDTQFHINPTGQFIIGGPVGDCGLTGRKIIVDSYGGMARHGGGAFSGKDPSKVDRSAAYAGRYVAKNIVAAGLAERCEIQVSYAIGVAQPTSISLNTFGTGKISDDKIVKLVREIFDLRPYAITTMLDLLHPMYQETAAYGHFGRTPAQKTVGDDTFTTFTWEKTDRANDLRIAAGL</sequence>
<protein>
    <recommendedName>
        <fullName evidence="1">S-adenosylmethionine synthase</fullName>
        <shortName evidence="1">AdoMet synthase</shortName>
        <ecNumber evidence="1">2.5.1.6</ecNumber>
    </recommendedName>
    <alternativeName>
        <fullName evidence="1">MAT</fullName>
    </alternativeName>
    <alternativeName>
        <fullName evidence="1">Methionine adenosyltransferase</fullName>
    </alternativeName>
</protein>
<keyword id="KW-0067">ATP-binding</keyword>
<keyword id="KW-0963">Cytoplasm</keyword>
<keyword id="KW-0460">Magnesium</keyword>
<keyword id="KW-0479">Metal-binding</keyword>
<keyword id="KW-0547">Nucleotide-binding</keyword>
<keyword id="KW-0554">One-carbon metabolism</keyword>
<keyword id="KW-0630">Potassium</keyword>
<keyword id="KW-0808">Transferase</keyword>
<gene>
    <name evidence="1" type="primary">metK</name>
    <name type="ordered locus">PFLU_5709</name>
</gene>
<feature type="chain" id="PRO_1000202624" description="S-adenosylmethionine synthase">
    <location>
        <begin position="1"/>
        <end position="396"/>
    </location>
</feature>
<feature type="region of interest" description="Flexible loop" evidence="1">
    <location>
        <begin position="100"/>
        <end position="110"/>
    </location>
</feature>
<feature type="binding site" description="in other chain" evidence="1">
    <location>
        <position position="16"/>
    </location>
    <ligand>
        <name>ATP</name>
        <dbReference type="ChEBI" id="CHEBI:30616"/>
        <note>ligand shared between two neighboring subunits</note>
    </ligand>
</feature>
<feature type="binding site" evidence="1">
    <location>
        <position position="18"/>
    </location>
    <ligand>
        <name>Mg(2+)</name>
        <dbReference type="ChEBI" id="CHEBI:18420"/>
    </ligand>
</feature>
<feature type="binding site" evidence="1">
    <location>
        <position position="44"/>
    </location>
    <ligand>
        <name>K(+)</name>
        <dbReference type="ChEBI" id="CHEBI:29103"/>
    </ligand>
</feature>
<feature type="binding site" description="in other chain" evidence="1">
    <location>
        <position position="57"/>
    </location>
    <ligand>
        <name>L-methionine</name>
        <dbReference type="ChEBI" id="CHEBI:57844"/>
        <note>ligand shared between two neighboring subunits</note>
    </ligand>
</feature>
<feature type="binding site" description="in other chain" evidence="1">
    <location>
        <position position="100"/>
    </location>
    <ligand>
        <name>L-methionine</name>
        <dbReference type="ChEBI" id="CHEBI:57844"/>
        <note>ligand shared between two neighboring subunits</note>
    </ligand>
</feature>
<feature type="binding site" description="in other chain" evidence="1">
    <location>
        <begin position="165"/>
        <end position="167"/>
    </location>
    <ligand>
        <name>ATP</name>
        <dbReference type="ChEBI" id="CHEBI:30616"/>
        <note>ligand shared between two neighboring subunits</note>
    </ligand>
</feature>
<feature type="binding site" evidence="1">
    <location>
        <position position="240"/>
    </location>
    <ligand>
        <name>ATP</name>
        <dbReference type="ChEBI" id="CHEBI:30616"/>
        <note>ligand shared between two neighboring subunits</note>
    </ligand>
</feature>
<feature type="binding site" evidence="1">
    <location>
        <position position="240"/>
    </location>
    <ligand>
        <name>L-methionine</name>
        <dbReference type="ChEBI" id="CHEBI:57844"/>
        <note>ligand shared between two neighboring subunits</note>
    </ligand>
</feature>
<feature type="binding site" description="in other chain" evidence="1">
    <location>
        <begin position="246"/>
        <end position="247"/>
    </location>
    <ligand>
        <name>ATP</name>
        <dbReference type="ChEBI" id="CHEBI:30616"/>
        <note>ligand shared between two neighboring subunits</note>
    </ligand>
</feature>
<feature type="binding site" evidence="1">
    <location>
        <position position="263"/>
    </location>
    <ligand>
        <name>ATP</name>
        <dbReference type="ChEBI" id="CHEBI:30616"/>
        <note>ligand shared between two neighboring subunits</note>
    </ligand>
</feature>
<feature type="binding site" evidence="1">
    <location>
        <position position="267"/>
    </location>
    <ligand>
        <name>ATP</name>
        <dbReference type="ChEBI" id="CHEBI:30616"/>
        <note>ligand shared between two neighboring subunits</note>
    </ligand>
</feature>
<feature type="binding site" description="in other chain" evidence="1">
    <location>
        <position position="271"/>
    </location>
    <ligand>
        <name>L-methionine</name>
        <dbReference type="ChEBI" id="CHEBI:57844"/>
        <note>ligand shared between two neighboring subunits</note>
    </ligand>
</feature>
<comment type="function">
    <text evidence="1">Catalyzes the formation of S-adenosylmethionine (AdoMet) from methionine and ATP. The overall synthetic reaction is composed of two sequential steps, AdoMet formation and the subsequent tripolyphosphate hydrolysis which occurs prior to release of AdoMet from the enzyme.</text>
</comment>
<comment type="catalytic activity">
    <reaction evidence="1">
        <text>L-methionine + ATP + H2O = S-adenosyl-L-methionine + phosphate + diphosphate</text>
        <dbReference type="Rhea" id="RHEA:21080"/>
        <dbReference type="ChEBI" id="CHEBI:15377"/>
        <dbReference type="ChEBI" id="CHEBI:30616"/>
        <dbReference type="ChEBI" id="CHEBI:33019"/>
        <dbReference type="ChEBI" id="CHEBI:43474"/>
        <dbReference type="ChEBI" id="CHEBI:57844"/>
        <dbReference type="ChEBI" id="CHEBI:59789"/>
        <dbReference type="EC" id="2.5.1.6"/>
    </reaction>
</comment>
<comment type="cofactor">
    <cofactor evidence="1">
        <name>Mg(2+)</name>
        <dbReference type="ChEBI" id="CHEBI:18420"/>
    </cofactor>
    <text evidence="1">Binds 2 divalent ions per subunit.</text>
</comment>
<comment type="cofactor">
    <cofactor evidence="1">
        <name>K(+)</name>
        <dbReference type="ChEBI" id="CHEBI:29103"/>
    </cofactor>
    <text evidence="1">Binds 1 potassium ion per subunit.</text>
</comment>
<comment type="pathway">
    <text evidence="1">Amino-acid biosynthesis; S-adenosyl-L-methionine biosynthesis; S-adenosyl-L-methionine from L-methionine: step 1/1.</text>
</comment>
<comment type="subunit">
    <text evidence="1">Homotetramer; dimer of dimers.</text>
</comment>
<comment type="subcellular location">
    <subcellularLocation>
        <location evidence="1">Cytoplasm</location>
    </subcellularLocation>
</comment>
<comment type="similarity">
    <text evidence="1">Belongs to the AdoMet synthase family.</text>
</comment>
<organism>
    <name type="scientific">Pseudomonas fluorescens (strain SBW25)</name>
    <dbReference type="NCBI Taxonomy" id="216595"/>
    <lineage>
        <taxon>Bacteria</taxon>
        <taxon>Pseudomonadati</taxon>
        <taxon>Pseudomonadota</taxon>
        <taxon>Gammaproteobacteria</taxon>
        <taxon>Pseudomonadales</taxon>
        <taxon>Pseudomonadaceae</taxon>
        <taxon>Pseudomonas</taxon>
    </lineage>
</organism>
<proteinExistence type="inferred from homology"/>
<dbReference type="EC" id="2.5.1.6" evidence="1"/>
<dbReference type="EMBL" id="AM181176">
    <property type="protein sequence ID" value="CAY53059.1"/>
    <property type="molecule type" value="Genomic_DNA"/>
</dbReference>
<dbReference type="RefSeq" id="WP_015886297.1">
    <property type="nucleotide sequence ID" value="NC_012660.1"/>
</dbReference>
<dbReference type="SMR" id="C3K3F5"/>
<dbReference type="STRING" id="294.SRM1_05360"/>
<dbReference type="GeneID" id="93467340"/>
<dbReference type="eggNOG" id="COG0192">
    <property type="taxonomic scope" value="Bacteria"/>
</dbReference>
<dbReference type="HOGENOM" id="CLU_041802_1_1_6"/>
<dbReference type="OrthoDB" id="9801686at2"/>
<dbReference type="UniPathway" id="UPA00315">
    <property type="reaction ID" value="UER00080"/>
</dbReference>
<dbReference type="GO" id="GO:0005737">
    <property type="term" value="C:cytoplasm"/>
    <property type="evidence" value="ECO:0007669"/>
    <property type="project" value="UniProtKB-SubCell"/>
</dbReference>
<dbReference type="GO" id="GO:0005524">
    <property type="term" value="F:ATP binding"/>
    <property type="evidence" value="ECO:0007669"/>
    <property type="project" value="UniProtKB-UniRule"/>
</dbReference>
<dbReference type="GO" id="GO:0000287">
    <property type="term" value="F:magnesium ion binding"/>
    <property type="evidence" value="ECO:0007669"/>
    <property type="project" value="UniProtKB-UniRule"/>
</dbReference>
<dbReference type="GO" id="GO:0004478">
    <property type="term" value="F:methionine adenosyltransferase activity"/>
    <property type="evidence" value="ECO:0007669"/>
    <property type="project" value="UniProtKB-UniRule"/>
</dbReference>
<dbReference type="GO" id="GO:0006730">
    <property type="term" value="P:one-carbon metabolic process"/>
    <property type="evidence" value="ECO:0007669"/>
    <property type="project" value="UniProtKB-KW"/>
</dbReference>
<dbReference type="GO" id="GO:0006556">
    <property type="term" value="P:S-adenosylmethionine biosynthetic process"/>
    <property type="evidence" value="ECO:0007669"/>
    <property type="project" value="UniProtKB-UniRule"/>
</dbReference>
<dbReference type="CDD" id="cd18079">
    <property type="entry name" value="S-AdoMet_synt"/>
    <property type="match status" value="1"/>
</dbReference>
<dbReference type="FunFam" id="3.30.300.10:FF:000003">
    <property type="entry name" value="S-adenosylmethionine synthase"/>
    <property type="match status" value="1"/>
</dbReference>
<dbReference type="Gene3D" id="3.30.300.10">
    <property type="match status" value="3"/>
</dbReference>
<dbReference type="HAMAP" id="MF_00086">
    <property type="entry name" value="S_AdoMet_synth1"/>
    <property type="match status" value="1"/>
</dbReference>
<dbReference type="InterPro" id="IPR022631">
    <property type="entry name" value="ADOMET_SYNTHASE_CS"/>
</dbReference>
<dbReference type="InterPro" id="IPR022630">
    <property type="entry name" value="S-AdoMet_synt_C"/>
</dbReference>
<dbReference type="InterPro" id="IPR022629">
    <property type="entry name" value="S-AdoMet_synt_central"/>
</dbReference>
<dbReference type="InterPro" id="IPR022628">
    <property type="entry name" value="S-AdoMet_synt_N"/>
</dbReference>
<dbReference type="InterPro" id="IPR002133">
    <property type="entry name" value="S-AdoMet_synthetase"/>
</dbReference>
<dbReference type="InterPro" id="IPR022636">
    <property type="entry name" value="S-AdoMet_synthetase_sfam"/>
</dbReference>
<dbReference type="NCBIfam" id="TIGR01034">
    <property type="entry name" value="metK"/>
    <property type="match status" value="1"/>
</dbReference>
<dbReference type="PANTHER" id="PTHR11964">
    <property type="entry name" value="S-ADENOSYLMETHIONINE SYNTHETASE"/>
    <property type="match status" value="1"/>
</dbReference>
<dbReference type="Pfam" id="PF02773">
    <property type="entry name" value="S-AdoMet_synt_C"/>
    <property type="match status" value="1"/>
</dbReference>
<dbReference type="Pfam" id="PF02772">
    <property type="entry name" value="S-AdoMet_synt_M"/>
    <property type="match status" value="1"/>
</dbReference>
<dbReference type="Pfam" id="PF00438">
    <property type="entry name" value="S-AdoMet_synt_N"/>
    <property type="match status" value="1"/>
</dbReference>
<dbReference type="PIRSF" id="PIRSF000497">
    <property type="entry name" value="MAT"/>
    <property type="match status" value="1"/>
</dbReference>
<dbReference type="SUPFAM" id="SSF55973">
    <property type="entry name" value="S-adenosylmethionine synthetase"/>
    <property type="match status" value="3"/>
</dbReference>
<dbReference type="PROSITE" id="PS00376">
    <property type="entry name" value="ADOMET_SYNTHASE_1"/>
    <property type="match status" value="1"/>
</dbReference>
<dbReference type="PROSITE" id="PS00377">
    <property type="entry name" value="ADOMET_SYNTHASE_2"/>
    <property type="match status" value="1"/>
</dbReference>
<reference key="1">
    <citation type="journal article" date="2009" name="Genome Biol.">
        <title>Genomic and genetic analyses of diversity and plant interactions of Pseudomonas fluorescens.</title>
        <authorList>
            <person name="Silby M.W."/>
            <person name="Cerdeno-Tarraga A.M."/>
            <person name="Vernikos G.S."/>
            <person name="Giddens S.R."/>
            <person name="Jackson R.W."/>
            <person name="Preston G.M."/>
            <person name="Zhang X.-X."/>
            <person name="Moon C.D."/>
            <person name="Gehrig S.M."/>
            <person name="Godfrey S.A.C."/>
            <person name="Knight C.G."/>
            <person name="Malone J.G."/>
            <person name="Robinson Z."/>
            <person name="Spiers A.J."/>
            <person name="Harris S."/>
            <person name="Challis G.L."/>
            <person name="Yaxley A.M."/>
            <person name="Harris D."/>
            <person name="Seeger K."/>
            <person name="Murphy L."/>
            <person name="Rutter S."/>
            <person name="Squares R."/>
            <person name="Quail M.A."/>
            <person name="Saunders E."/>
            <person name="Mavromatis K."/>
            <person name="Brettin T.S."/>
            <person name="Bentley S.D."/>
            <person name="Hothersall J."/>
            <person name="Stephens E."/>
            <person name="Thomas C.M."/>
            <person name="Parkhill J."/>
            <person name="Levy S.B."/>
            <person name="Rainey P.B."/>
            <person name="Thomson N.R."/>
        </authorList>
    </citation>
    <scope>NUCLEOTIDE SEQUENCE [LARGE SCALE GENOMIC DNA]</scope>
    <source>
        <strain>SBW25</strain>
    </source>
</reference>
<accession>C3K3F5</accession>
<evidence type="ECO:0000255" key="1">
    <source>
        <dbReference type="HAMAP-Rule" id="MF_00086"/>
    </source>
</evidence>
<name>METK_PSEFS</name>